<name>NIKE_PSEPK</name>
<comment type="function">
    <text evidence="1">Part of the ABC transporter complex NikABCDE involved in nickel import. Responsible for energy coupling to the transport system.</text>
</comment>
<comment type="catalytic activity">
    <reaction evidence="1">
        <text>Ni(2+)(out) + ATP + H2O = Ni(2+)(in) + ADP + phosphate + H(+)</text>
        <dbReference type="Rhea" id="RHEA:15557"/>
        <dbReference type="ChEBI" id="CHEBI:15377"/>
        <dbReference type="ChEBI" id="CHEBI:15378"/>
        <dbReference type="ChEBI" id="CHEBI:30616"/>
        <dbReference type="ChEBI" id="CHEBI:43474"/>
        <dbReference type="ChEBI" id="CHEBI:49786"/>
        <dbReference type="ChEBI" id="CHEBI:456216"/>
        <dbReference type="EC" id="7.2.2.11"/>
    </reaction>
</comment>
<comment type="subunit">
    <text evidence="1">The complex is composed of two ATP-binding proteins (NikD and NikE), two transmembrane proteins (NikB and NikC) and a solute-binding protein (NikA).</text>
</comment>
<comment type="subcellular location">
    <subcellularLocation>
        <location evidence="1">Cell inner membrane</location>
        <topology evidence="1">Peripheral membrane protein</topology>
    </subcellularLocation>
</comment>
<comment type="similarity">
    <text evidence="1">Belongs to the ABC transporter superfamily. Nickel importer (TC 3.A.1.5.3) family.</text>
</comment>
<reference key="1">
    <citation type="journal article" date="2002" name="Environ. Microbiol.">
        <title>Complete genome sequence and comparative analysis of the metabolically versatile Pseudomonas putida KT2440.</title>
        <authorList>
            <person name="Nelson K.E."/>
            <person name="Weinel C."/>
            <person name="Paulsen I.T."/>
            <person name="Dodson R.J."/>
            <person name="Hilbert H."/>
            <person name="Martins dos Santos V.A.P."/>
            <person name="Fouts D.E."/>
            <person name="Gill S.R."/>
            <person name="Pop M."/>
            <person name="Holmes M."/>
            <person name="Brinkac L.M."/>
            <person name="Beanan M.J."/>
            <person name="DeBoy R.T."/>
            <person name="Daugherty S.C."/>
            <person name="Kolonay J.F."/>
            <person name="Madupu R."/>
            <person name="Nelson W.C."/>
            <person name="White O."/>
            <person name="Peterson J.D."/>
            <person name="Khouri H.M."/>
            <person name="Hance I."/>
            <person name="Chris Lee P."/>
            <person name="Holtzapple E.K."/>
            <person name="Scanlan D."/>
            <person name="Tran K."/>
            <person name="Moazzez A."/>
            <person name="Utterback T.R."/>
            <person name="Rizzo M."/>
            <person name="Lee K."/>
            <person name="Kosack D."/>
            <person name="Moestl D."/>
            <person name="Wedler H."/>
            <person name="Lauber J."/>
            <person name="Stjepandic D."/>
            <person name="Hoheisel J."/>
            <person name="Straetz M."/>
            <person name="Heim S."/>
            <person name="Kiewitz C."/>
            <person name="Eisen J.A."/>
            <person name="Timmis K.N."/>
            <person name="Duesterhoeft A."/>
            <person name="Tuemmler B."/>
            <person name="Fraser C.M."/>
        </authorList>
    </citation>
    <scope>NUCLEOTIDE SEQUENCE [LARGE SCALE GENOMIC DNA]</scope>
    <source>
        <strain>ATCC 47054 / DSM 6125 / CFBP 8728 / NCIMB 11950 / KT2440</strain>
    </source>
</reference>
<keyword id="KW-0067">ATP-binding</keyword>
<keyword id="KW-0997">Cell inner membrane</keyword>
<keyword id="KW-1003">Cell membrane</keyword>
<keyword id="KW-0406">Ion transport</keyword>
<keyword id="KW-0472">Membrane</keyword>
<keyword id="KW-0533">Nickel</keyword>
<keyword id="KW-0921">Nickel transport</keyword>
<keyword id="KW-0547">Nucleotide-binding</keyword>
<keyword id="KW-1185">Reference proteome</keyword>
<keyword id="KW-1278">Translocase</keyword>
<keyword id="KW-0813">Transport</keyword>
<accession>Q88HL0</accession>
<proteinExistence type="inferred from homology"/>
<protein>
    <recommendedName>
        <fullName evidence="1">Nickel import ATP-binding protein NikE</fullName>
        <ecNumber evidence="1">7.2.2.11</ecNumber>
    </recommendedName>
</protein>
<organism>
    <name type="scientific">Pseudomonas putida (strain ATCC 47054 / DSM 6125 / CFBP 8728 / NCIMB 11950 / KT2440)</name>
    <dbReference type="NCBI Taxonomy" id="160488"/>
    <lineage>
        <taxon>Bacteria</taxon>
        <taxon>Pseudomonadati</taxon>
        <taxon>Pseudomonadota</taxon>
        <taxon>Gammaproteobacteria</taxon>
        <taxon>Pseudomonadales</taxon>
        <taxon>Pseudomonadaceae</taxon>
        <taxon>Pseudomonas</taxon>
    </lineage>
</organism>
<gene>
    <name evidence="1" type="primary">nikE</name>
    <name type="ordered locus">PP_3346</name>
</gene>
<sequence>MSLLHVHHVGHRYRTGGLLRKRGWLQVLDGIDLQLHAGESIGLLGSSGSGKSTLARLLLGLEKPAQGQVSFAGQDVSQLKGEQARAFQRTVQLVFQDAPGAFNPQRSIGWSIAEPLRHLTDMDEAARQARTLALLEEMGLRAEHAQRLPQQLSGGQLQRANIARALAASPQLVVLDEALSNLDRLLQLQILQQLEALRQRSGTAFVLISHDLSLVQYFCQRVVLLHGGRIVEERPVTHDLCFAHPVGRQLQAAVLPVRPQRRPSPQGLPTAAH</sequence>
<dbReference type="EC" id="7.2.2.11" evidence="1"/>
<dbReference type="EMBL" id="AE015451">
    <property type="protein sequence ID" value="AAN68950.1"/>
    <property type="molecule type" value="Genomic_DNA"/>
</dbReference>
<dbReference type="RefSeq" id="NP_745486.1">
    <property type="nucleotide sequence ID" value="NC_002947.4"/>
</dbReference>
<dbReference type="RefSeq" id="WP_010954222.1">
    <property type="nucleotide sequence ID" value="NZ_CP169744.1"/>
</dbReference>
<dbReference type="SMR" id="Q88HL0"/>
<dbReference type="STRING" id="160488.PP_3346"/>
<dbReference type="PaxDb" id="160488-PP_3346"/>
<dbReference type="GeneID" id="83679944"/>
<dbReference type="KEGG" id="ppu:PP_3346"/>
<dbReference type="PATRIC" id="fig|160488.4.peg.3558"/>
<dbReference type="eggNOG" id="COG1124">
    <property type="taxonomic scope" value="Bacteria"/>
</dbReference>
<dbReference type="HOGENOM" id="CLU_000604_1_23_6"/>
<dbReference type="OrthoDB" id="9784450at2"/>
<dbReference type="PhylomeDB" id="Q88HL0"/>
<dbReference type="BioCyc" id="PPUT160488:G1G01-3579-MONOMER"/>
<dbReference type="Proteomes" id="UP000000556">
    <property type="component" value="Chromosome"/>
</dbReference>
<dbReference type="GO" id="GO:0005886">
    <property type="term" value="C:plasma membrane"/>
    <property type="evidence" value="ECO:0007669"/>
    <property type="project" value="UniProtKB-SubCell"/>
</dbReference>
<dbReference type="GO" id="GO:0015413">
    <property type="term" value="F:ABC-type nickel transporter activity"/>
    <property type="evidence" value="ECO:0007669"/>
    <property type="project" value="UniProtKB-EC"/>
</dbReference>
<dbReference type="GO" id="GO:0005524">
    <property type="term" value="F:ATP binding"/>
    <property type="evidence" value="ECO:0007669"/>
    <property type="project" value="UniProtKB-KW"/>
</dbReference>
<dbReference type="GO" id="GO:0016887">
    <property type="term" value="F:ATP hydrolysis activity"/>
    <property type="evidence" value="ECO:0007669"/>
    <property type="project" value="InterPro"/>
</dbReference>
<dbReference type="GO" id="GO:0016151">
    <property type="term" value="F:nickel cation binding"/>
    <property type="evidence" value="ECO:0007669"/>
    <property type="project" value="InterPro"/>
</dbReference>
<dbReference type="CDD" id="cd03257">
    <property type="entry name" value="ABC_NikE_OppD_transporters"/>
    <property type="match status" value="1"/>
</dbReference>
<dbReference type="Gene3D" id="3.40.50.300">
    <property type="entry name" value="P-loop containing nucleotide triphosphate hydrolases"/>
    <property type="match status" value="1"/>
</dbReference>
<dbReference type="InterPro" id="IPR003593">
    <property type="entry name" value="AAA+_ATPase"/>
</dbReference>
<dbReference type="InterPro" id="IPR050319">
    <property type="entry name" value="ABC_transp_ATP-bind"/>
</dbReference>
<dbReference type="InterPro" id="IPR003439">
    <property type="entry name" value="ABC_transporter-like_ATP-bd"/>
</dbReference>
<dbReference type="InterPro" id="IPR017871">
    <property type="entry name" value="ABC_transporter-like_CS"/>
</dbReference>
<dbReference type="InterPro" id="IPR014137">
    <property type="entry name" value="Nickel_NikE"/>
</dbReference>
<dbReference type="InterPro" id="IPR027417">
    <property type="entry name" value="P-loop_NTPase"/>
</dbReference>
<dbReference type="NCBIfam" id="TIGR02769">
    <property type="entry name" value="nickel_nikE"/>
    <property type="match status" value="1"/>
</dbReference>
<dbReference type="NCBIfam" id="NF007739">
    <property type="entry name" value="PRK10419.1"/>
    <property type="match status" value="1"/>
</dbReference>
<dbReference type="PANTHER" id="PTHR43776:SF7">
    <property type="entry name" value="D,D-DIPEPTIDE TRANSPORT ATP-BINDING PROTEIN DDPF-RELATED"/>
    <property type="match status" value="1"/>
</dbReference>
<dbReference type="PANTHER" id="PTHR43776">
    <property type="entry name" value="TRANSPORT ATP-BINDING PROTEIN"/>
    <property type="match status" value="1"/>
</dbReference>
<dbReference type="Pfam" id="PF00005">
    <property type="entry name" value="ABC_tran"/>
    <property type="match status" value="1"/>
</dbReference>
<dbReference type="SMART" id="SM00382">
    <property type="entry name" value="AAA"/>
    <property type="match status" value="1"/>
</dbReference>
<dbReference type="SUPFAM" id="SSF52540">
    <property type="entry name" value="P-loop containing nucleoside triphosphate hydrolases"/>
    <property type="match status" value="1"/>
</dbReference>
<dbReference type="PROSITE" id="PS00211">
    <property type="entry name" value="ABC_TRANSPORTER_1"/>
    <property type="match status" value="1"/>
</dbReference>
<dbReference type="PROSITE" id="PS50893">
    <property type="entry name" value="ABC_TRANSPORTER_2"/>
    <property type="match status" value="1"/>
</dbReference>
<dbReference type="PROSITE" id="PS51248">
    <property type="entry name" value="NIKE"/>
    <property type="match status" value="1"/>
</dbReference>
<evidence type="ECO:0000255" key="1">
    <source>
        <dbReference type="HAMAP-Rule" id="MF_01712"/>
    </source>
</evidence>
<feature type="chain" id="PRO_0000092630" description="Nickel import ATP-binding protein NikE">
    <location>
        <begin position="1"/>
        <end position="273"/>
    </location>
</feature>
<feature type="domain" description="ABC transporter" evidence="1">
    <location>
        <begin position="13"/>
        <end position="252"/>
    </location>
</feature>
<feature type="binding site" evidence="1">
    <location>
        <begin position="45"/>
        <end position="52"/>
    </location>
    <ligand>
        <name>ATP</name>
        <dbReference type="ChEBI" id="CHEBI:30616"/>
    </ligand>
</feature>